<comment type="function">
    <text evidence="1">Endonuclease IV plays a role in DNA repair. It cleaves phosphodiester bonds at apurinic or apyrimidinic (AP) sites, generating a 3'-hydroxyl group and a 5'-terminal sugar phosphate.</text>
</comment>
<comment type="catalytic activity">
    <reaction evidence="1">
        <text>Endonucleolytic cleavage to 5'-phosphooligonucleotide end-products.</text>
        <dbReference type="EC" id="3.1.21.2"/>
    </reaction>
</comment>
<comment type="cofactor">
    <cofactor evidence="1">
        <name>Zn(2+)</name>
        <dbReference type="ChEBI" id="CHEBI:29105"/>
    </cofactor>
    <text evidence="1">Binds 3 Zn(2+) ions.</text>
</comment>
<comment type="similarity">
    <text evidence="1">Belongs to the AP endonuclease 2 family.</text>
</comment>
<reference key="1">
    <citation type="submission" date="2008-04" db="EMBL/GenBank/DDBJ databases">
        <title>Complete sequence of chromosome of Natranaerobius thermophilus JW/NM-WN-LF.</title>
        <authorList>
            <consortium name="US DOE Joint Genome Institute"/>
            <person name="Copeland A."/>
            <person name="Lucas S."/>
            <person name="Lapidus A."/>
            <person name="Glavina del Rio T."/>
            <person name="Dalin E."/>
            <person name="Tice H."/>
            <person name="Bruce D."/>
            <person name="Goodwin L."/>
            <person name="Pitluck S."/>
            <person name="Chertkov O."/>
            <person name="Brettin T."/>
            <person name="Detter J.C."/>
            <person name="Han C."/>
            <person name="Kuske C.R."/>
            <person name="Schmutz J."/>
            <person name="Larimer F."/>
            <person name="Land M."/>
            <person name="Hauser L."/>
            <person name="Kyrpides N."/>
            <person name="Lykidis A."/>
            <person name="Mesbah N.M."/>
            <person name="Wiegel J."/>
        </authorList>
    </citation>
    <scope>NUCLEOTIDE SEQUENCE [LARGE SCALE GENOMIC DNA]</scope>
    <source>
        <strain>ATCC BAA-1301 / DSM 18059 / JW/NM-WN-LF</strain>
    </source>
</reference>
<evidence type="ECO:0000255" key="1">
    <source>
        <dbReference type="HAMAP-Rule" id="MF_00152"/>
    </source>
</evidence>
<dbReference type="EC" id="3.1.21.2" evidence="1"/>
<dbReference type="EMBL" id="CP001034">
    <property type="protein sequence ID" value="ACB83753.1"/>
    <property type="molecule type" value="Genomic_DNA"/>
</dbReference>
<dbReference type="RefSeq" id="WP_012446644.1">
    <property type="nucleotide sequence ID" value="NC_010718.1"/>
</dbReference>
<dbReference type="SMR" id="B2A499"/>
<dbReference type="FunCoup" id="B2A499">
    <property type="interactions" value="133"/>
</dbReference>
<dbReference type="STRING" id="457570.Nther_0154"/>
<dbReference type="KEGG" id="nth:Nther_0154"/>
<dbReference type="eggNOG" id="COG0648">
    <property type="taxonomic scope" value="Bacteria"/>
</dbReference>
<dbReference type="HOGENOM" id="CLU_025885_0_1_9"/>
<dbReference type="InParanoid" id="B2A499"/>
<dbReference type="OrthoDB" id="9805666at2"/>
<dbReference type="Proteomes" id="UP000001683">
    <property type="component" value="Chromosome"/>
</dbReference>
<dbReference type="GO" id="GO:0008833">
    <property type="term" value="F:deoxyribonuclease IV (phage-T4-induced) activity"/>
    <property type="evidence" value="ECO:0007669"/>
    <property type="project" value="UniProtKB-UniRule"/>
</dbReference>
<dbReference type="GO" id="GO:0003677">
    <property type="term" value="F:DNA binding"/>
    <property type="evidence" value="ECO:0007669"/>
    <property type="project" value="InterPro"/>
</dbReference>
<dbReference type="GO" id="GO:0003906">
    <property type="term" value="F:DNA-(apurinic or apyrimidinic site) endonuclease activity"/>
    <property type="evidence" value="ECO:0007669"/>
    <property type="project" value="TreeGrafter"/>
</dbReference>
<dbReference type="GO" id="GO:0008081">
    <property type="term" value="F:phosphoric diester hydrolase activity"/>
    <property type="evidence" value="ECO:0007669"/>
    <property type="project" value="TreeGrafter"/>
</dbReference>
<dbReference type="GO" id="GO:0008270">
    <property type="term" value="F:zinc ion binding"/>
    <property type="evidence" value="ECO:0007669"/>
    <property type="project" value="UniProtKB-UniRule"/>
</dbReference>
<dbReference type="GO" id="GO:0006284">
    <property type="term" value="P:base-excision repair"/>
    <property type="evidence" value="ECO:0007669"/>
    <property type="project" value="TreeGrafter"/>
</dbReference>
<dbReference type="CDD" id="cd00019">
    <property type="entry name" value="AP2Ec"/>
    <property type="match status" value="1"/>
</dbReference>
<dbReference type="Gene3D" id="3.20.20.150">
    <property type="entry name" value="Divalent-metal-dependent TIM barrel enzymes"/>
    <property type="match status" value="1"/>
</dbReference>
<dbReference type="HAMAP" id="MF_00152">
    <property type="entry name" value="Nfo"/>
    <property type="match status" value="1"/>
</dbReference>
<dbReference type="InterPro" id="IPR001719">
    <property type="entry name" value="AP_endonuc_2"/>
</dbReference>
<dbReference type="InterPro" id="IPR036237">
    <property type="entry name" value="Xyl_isomerase-like_sf"/>
</dbReference>
<dbReference type="InterPro" id="IPR013022">
    <property type="entry name" value="Xyl_isomerase-like_TIM-brl"/>
</dbReference>
<dbReference type="NCBIfam" id="TIGR00587">
    <property type="entry name" value="nfo"/>
    <property type="match status" value="1"/>
</dbReference>
<dbReference type="PANTHER" id="PTHR21445:SF0">
    <property type="entry name" value="APURINIC-APYRIMIDINIC ENDONUCLEASE"/>
    <property type="match status" value="1"/>
</dbReference>
<dbReference type="PANTHER" id="PTHR21445">
    <property type="entry name" value="ENDONUCLEASE IV ENDODEOXYRIBONUCLEASE IV"/>
    <property type="match status" value="1"/>
</dbReference>
<dbReference type="Pfam" id="PF01261">
    <property type="entry name" value="AP_endonuc_2"/>
    <property type="match status" value="1"/>
</dbReference>
<dbReference type="SMART" id="SM00518">
    <property type="entry name" value="AP2Ec"/>
    <property type="match status" value="1"/>
</dbReference>
<dbReference type="SUPFAM" id="SSF51658">
    <property type="entry name" value="Xylose isomerase-like"/>
    <property type="match status" value="1"/>
</dbReference>
<dbReference type="PROSITE" id="PS51432">
    <property type="entry name" value="AP_NUCLEASE_F2_4"/>
    <property type="match status" value="1"/>
</dbReference>
<gene>
    <name evidence="1" type="primary">nfo</name>
    <name type="ordered locus">Nther_0154</name>
</gene>
<name>END4_NATTJ</name>
<sequence>MRLGFHMPLSGGVGKQLNRASELGMECIQIFSGNPTSWKPGKITPKSRDLFIKKQEELQIKPLVFHTPYLINLASPKNDIREKSIYLLNAALEKAKAYDAPYVVTHIGSHVGEGVEKGIDLVSYSLEKIMEDWPEGVELLLENTSGAGSTLGGSLTELKKIIDKFSGTQVLGCCFDTAHAWGAGYDISNVKEVETTLELVNEQLGLDLIKVCHANDTNVPLGSTKDRHQHIGEGNITDEGFGALLTHDSFTPKAVIMETPKNGTDCDQINLQRLKKVVGRHEEE</sequence>
<protein>
    <recommendedName>
        <fullName evidence="1">Probable endonuclease 4</fullName>
        <ecNumber evidence="1">3.1.21.2</ecNumber>
    </recommendedName>
    <alternativeName>
        <fullName evidence="1">Endodeoxyribonuclease IV</fullName>
    </alternativeName>
    <alternativeName>
        <fullName evidence="1">Endonuclease IV</fullName>
    </alternativeName>
</protein>
<organism>
    <name type="scientific">Natranaerobius thermophilus (strain ATCC BAA-1301 / DSM 18059 / JW/NM-WN-LF)</name>
    <dbReference type="NCBI Taxonomy" id="457570"/>
    <lineage>
        <taxon>Bacteria</taxon>
        <taxon>Bacillati</taxon>
        <taxon>Bacillota</taxon>
        <taxon>Clostridia</taxon>
        <taxon>Natranaerobiales</taxon>
        <taxon>Natranaerobiaceae</taxon>
        <taxon>Natranaerobius</taxon>
    </lineage>
</organism>
<accession>B2A499</accession>
<feature type="chain" id="PRO_1000096893" description="Probable endonuclease 4">
    <location>
        <begin position="1"/>
        <end position="284"/>
    </location>
</feature>
<feature type="binding site" evidence="1">
    <location>
        <position position="66"/>
    </location>
    <ligand>
        <name>Zn(2+)</name>
        <dbReference type="ChEBI" id="CHEBI:29105"/>
        <label>1</label>
    </ligand>
</feature>
<feature type="binding site" evidence="1">
    <location>
        <position position="106"/>
    </location>
    <ligand>
        <name>Zn(2+)</name>
        <dbReference type="ChEBI" id="CHEBI:29105"/>
        <label>1</label>
    </ligand>
</feature>
<feature type="binding site" evidence="1">
    <location>
        <position position="142"/>
    </location>
    <ligand>
        <name>Zn(2+)</name>
        <dbReference type="ChEBI" id="CHEBI:29105"/>
        <label>1</label>
    </ligand>
</feature>
<feature type="binding site" evidence="1">
    <location>
        <position position="142"/>
    </location>
    <ligand>
        <name>Zn(2+)</name>
        <dbReference type="ChEBI" id="CHEBI:29105"/>
        <label>2</label>
    </ligand>
</feature>
<feature type="binding site" evidence="1">
    <location>
        <position position="176"/>
    </location>
    <ligand>
        <name>Zn(2+)</name>
        <dbReference type="ChEBI" id="CHEBI:29105"/>
        <label>2</label>
    </ligand>
</feature>
<feature type="binding site" evidence="1">
    <location>
        <position position="179"/>
    </location>
    <ligand>
        <name>Zn(2+)</name>
        <dbReference type="ChEBI" id="CHEBI:29105"/>
        <label>3</label>
    </ligand>
</feature>
<feature type="binding site" evidence="1">
    <location>
        <position position="213"/>
    </location>
    <ligand>
        <name>Zn(2+)</name>
        <dbReference type="ChEBI" id="CHEBI:29105"/>
        <label>2</label>
    </ligand>
</feature>
<feature type="binding site" evidence="1">
    <location>
        <position position="226"/>
    </location>
    <ligand>
        <name>Zn(2+)</name>
        <dbReference type="ChEBI" id="CHEBI:29105"/>
        <label>3</label>
    </ligand>
</feature>
<feature type="binding site" evidence="1">
    <location>
        <position position="228"/>
    </location>
    <ligand>
        <name>Zn(2+)</name>
        <dbReference type="ChEBI" id="CHEBI:29105"/>
        <label>3</label>
    </ligand>
</feature>
<feature type="binding site" evidence="1">
    <location>
        <position position="258"/>
    </location>
    <ligand>
        <name>Zn(2+)</name>
        <dbReference type="ChEBI" id="CHEBI:29105"/>
        <label>2</label>
    </ligand>
</feature>
<proteinExistence type="inferred from homology"/>
<keyword id="KW-0227">DNA damage</keyword>
<keyword id="KW-0234">DNA repair</keyword>
<keyword id="KW-0255">Endonuclease</keyword>
<keyword id="KW-0378">Hydrolase</keyword>
<keyword id="KW-0479">Metal-binding</keyword>
<keyword id="KW-0540">Nuclease</keyword>
<keyword id="KW-1185">Reference proteome</keyword>
<keyword id="KW-0862">Zinc</keyword>